<sequence length="572" mass="63431">MADFEELRNMVSSFRVSELQVLLGFAGRNKSGRKHDLLMRALHLLKSGCTPAVQIKIRELYRRRYPRTLEGLSDLSTIKSSVFSLDGSSSPVEPDLAVAGIHSLPSTSIAPHSPSSPVASVLLQDTKPTFEMQQPSPPIPPVHPDVQLKTLPFYDVLDVLIKPTSLVQSSIQRFQEKFFIFALTPQQVREICISRDFLPGGRRDYTVQVQLRLCLAETSCPQEDNYPNSLCIKVNGKLFPLPGYAPPPKNGIEQKRPGRPLNITSLVRLSSAVPNQISISWASEIGKNYSMSVYLVRQLTSAMLLQRLKMKGIRNPDHSRALIKEKLTADPDSEIATTSLRVSLMCPLGKMRLTIPCRAVTCTHLQCFDAALYLQMNEKKPTWICPVCDKKAAYESLILDGLFMEILNDCSDVDEIKFQEDGSWCPMRPKKEAMKVTSQPCTKVESSSVFSKPCSVTVASDASKKKIDVIDLTIESSSDEEEDPPAKRKCIFMSETQSSPTKGVLMYQPSSVRVPSVTSVDPAAIPPSLTDYSVPFHHTPVSSMSSDLPGEQRRNDINNEVQLGTSSDTVQQ</sequence>
<accession>Q6AZ28</accession>
<accession>Q9Z177</accession>
<proteinExistence type="evidence at protein level"/>
<gene>
    <name type="primary">Pias2</name>
    <name type="synonym">Miz1</name>
    <name type="synonym">Piasx</name>
</gene>
<feature type="chain" id="PRO_0000218978" description="E3 SUMO-protein ligase PIAS2">
    <location>
        <begin position="1"/>
        <end position="572"/>
    </location>
</feature>
<feature type="domain" description="SAP" evidence="4">
    <location>
        <begin position="11"/>
        <end position="45"/>
    </location>
</feature>
<feature type="domain" description="PINIT" evidence="6">
    <location>
        <begin position="134"/>
        <end position="299"/>
    </location>
</feature>
<feature type="zinc finger region" description="SP-RING-type" evidence="5">
    <location>
        <begin position="331"/>
        <end position="412"/>
    </location>
</feature>
<feature type="region of interest" description="SUMO1-binding" evidence="1">
    <location>
        <begin position="467"/>
        <end position="473"/>
    </location>
</feature>
<feature type="region of interest" description="Disordered" evidence="7">
    <location>
        <begin position="523"/>
        <end position="572"/>
    </location>
</feature>
<feature type="short sequence motif" description="LXXLL motif">
    <location>
        <begin position="19"/>
        <end position="23"/>
    </location>
</feature>
<feature type="short sequence motif" description="Nuclear localization signal" evidence="1">
    <location>
        <begin position="484"/>
        <end position="492"/>
    </location>
</feature>
<feature type="compositionally biased region" description="Polar residues" evidence="7">
    <location>
        <begin position="558"/>
        <end position="572"/>
    </location>
</feature>
<feature type="binding site" evidence="5">
    <location>
        <position position="362"/>
    </location>
    <ligand>
        <name>Zn(2+)</name>
        <dbReference type="ChEBI" id="CHEBI:29105"/>
    </ligand>
</feature>
<feature type="binding site" evidence="5">
    <location>
        <position position="364"/>
    </location>
    <ligand>
        <name>Zn(2+)</name>
        <dbReference type="ChEBI" id="CHEBI:29105"/>
    </ligand>
</feature>
<feature type="binding site" evidence="5">
    <location>
        <position position="385"/>
    </location>
    <ligand>
        <name>Zn(2+)</name>
        <dbReference type="ChEBI" id="CHEBI:29105"/>
    </ligand>
</feature>
<feature type="binding site" evidence="5">
    <location>
        <position position="388"/>
    </location>
    <ligand>
        <name>Zn(2+)</name>
        <dbReference type="ChEBI" id="CHEBI:29105"/>
    </ligand>
</feature>
<feature type="modified residue" description="Phosphoserine" evidence="2">
    <location>
        <position position="476"/>
    </location>
</feature>
<feature type="modified residue" description="Phosphoserine" evidence="2">
    <location>
        <position position="477"/>
    </location>
</feature>
<feature type="modified residue" description="Phosphoserine" evidence="2">
    <location>
        <position position="478"/>
    </location>
</feature>
<feature type="modified residue" description="Phosphoserine" evidence="3">
    <location>
        <position position="499"/>
    </location>
</feature>
<feature type="cross-link" description="Glycyl lysine isopeptide (Lys-Gly) (interchain with G-Cter in SUMO2)" evidence="2">
    <location>
        <position position="46"/>
    </location>
</feature>
<feature type="cross-link" description="Glycyl lysine isopeptide (Lys-Gly) (interchain with G-Cter in SUMO2)" evidence="2">
    <location>
        <position position="249"/>
    </location>
</feature>
<feature type="cross-link" description="Glycyl lysine isopeptide (Lys-Gly) (interchain with G-Cter in SUMO2)" evidence="2">
    <location>
        <position position="430"/>
    </location>
</feature>
<feature type="cross-link" description="Glycyl lysine isopeptide (Lys-Gly) (interchain with G-Cter in SUMO2)" evidence="2">
    <location>
        <position position="435"/>
    </location>
</feature>
<feature type="cross-link" description="Glycyl lysine isopeptide (Lys-Gly) (interchain with G-Cter in SUMO2)" evidence="2">
    <location>
        <position position="443"/>
    </location>
</feature>
<feature type="cross-link" description="Glycyl lysine isopeptide (Lys-Gly) (interchain with G-Cter in SUMO2)" evidence="2">
    <location>
        <position position="452"/>
    </location>
</feature>
<feature type="cross-link" description="Glycyl lysine isopeptide (Lys-Gly) (interchain with G-Cter in SUMO2)" evidence="2">
    <location>
        <position position="489"/>
    </location>
</feature>
<feature type="cross-link" description="Glycyl lysine isopeptide (Lys-Gly) (interchain with G-Cter in SUMO2)" evidence="2">
    <location>
        <position position="502"/>
    </location>
</feature>
<feature type="mutagenesis site" description="Loss of enhancement of AR and NR3C1-dependent transactivation; no effect on interaction with AR and NR3C1; when associated with A-305." evidence="8">
    <original>L</original>
    <variation>A</variation>
    <location>
        <position position="23"/>
    </location>
</feature>
<feature type="mutagenesis site" description="Loss of enhancement of AR and NR3C1-dependent transactivation; no effect on interaction with AR and NR3C1; when associated with A-23." evidence="8">
    <original>L</original>
    <variation>A</variation>
    <location>
        <position position="304"/>
    </location>
</feature>
<feature type="mutagenesis site" description="No effect on auto-sumoylation; when associated with R-326." evidence="9">
    <original>K</original>
    <variation>R</variation>
    <location>
        <position position="324"/>
    </location>
</feature>
<feature type="mutagenesis site" description="No effect on auto-sumoylation; when associated with R-324." evidence="9">
    <original>K</original>
    <variation>R</variation>
    <location>
        <position position="326"/>
    </location>
</feature>
<feature type="mutagenesis site" description="No effect on auto-sumoylation; when associated with R-380." evidence="9">
    <original>K</original>
    <variation>R</variation>
    <location>
        <position position="379"/>
    </location>
</feature>
<feature type="mutagenesis site" description="No effect on auto-sumoylation; when associated with R-379." evidence="9">
    <original>K</original>
    <variation>R</variation>
    <location>
        <position position="380"/>
    </location>
</feature>
<feature type="mutagenesis site" description="Loss of promotion of JUN sumoylation; no loss of interaction with SUMO1 and UBE2I." evidence="9">
    <original>W</original>
    <variation>A</variation>
    <location>
        <position position="383"/>
    </location>
</feature>
<feature type="mutagenesis site" description="Loss of NCOA2-binding; when associated with S-388." evidence="8">
    <original>C</original>
    <variation>S</variation>
    <location>
        <position position="385"/>
    </location>
</feature>
<feature type="mutagenesis site" description="Loss of NCOA2-binding; when associated with S-385." evidence="8">
    <original>C</original>
    <variation>S</variation>
    <location>
        <position position="388"/>
    </location>
</feature>
<feature type="mutagenesis site" description="No effect on auto-sumoylation; when associated with R-391." evidence="9">
    <original>K</original>
    <variation>R</variation>
    <location>
        <position position="390"/>
    </location>
</feature>
<feature type="mutagenesis site" description="No effect on auto-sumoylation; when associated with R-390." evidence="9">
    <original>K</original>
    <variation>R</variation>
    <location>
        <position position="391"/>
    </location>
</feature>
<feature type="mutagenesis site" description="No effect on auto-sumoylation; when associated with R-431." evidence="9">
    <original>K</original>
    <variation>R</variation>
    <location>
        <position position="430"/>
    </location>
</feature>
<feature type="mutagenesis site" description="No effect on auto-sumoylation; when associated with R-430." evidence="9">
    <original>K</original>
    <variation>R</variation>
    <location>
        <position position="431"/>
    </location>
</feature>
<feature type="sequence conflict" description="In Ref. 1; AAD13349." evidence="11" ref="1">
    <original>T</original>
    <variation>S</variation>
    <location>
        <position position="50"/>
    </location>
</feature>
<feature type="sequence conflict" description="In Ref. 1; AAD13349." evidence="11" ref="1">
    <original>R</original>
    <variation>K</variation>
    <location>
        <position position="320"/>
    </location>
</feature>
<name>PIAS2_RAT</name>
<organism>
    <name type="scientific">Rattus norvegicus</name>
    <name type="common">Rat</name>
    <dbReference type="NCBI Taxonomy" id="10116"/>
    <lineage>
        <taxon>Eukaryota</taxon>
        <taxon>Metazoa</taxon>
        <taxon>Chordata</taxon>
        <taxon>Craniata</taxon>
        <taxon>Vertebrata</taxon>
        <taxon>Euteleostomi</taxon>
        <taxon>Mammalia</taxon>
        <taxon>Eutheria</taxon>
        <taxon>Euarchontoglires</taxon>
        <taxon>Glires</taxon>
        <taxon>Rodentia</taxon>
        <taxon>Myomorpha</taxon>
        <taxon>Muroidea</taxon>
        <taxon>Muridae</taxon>
        <taxon>Murinae</taxon>
        <taxon>Rattus</taxon>
    </lineage>
</organism>
<dbReference type="EC" id="2.3.2.-"/>
<dbReference type="EMBL" id="AF044058">
    <property type="protein sequence ID" value="AAD13349.1"/>
    <property type="molecule type" value="mRNA"/>
</dbReference>
<dbReference type="EMBL" id="BC078775">
    <property type="protein sequence ID" value="AAH78775.1"/>
    <property type="molecule type" value="mRNA"/>
</dbReference>
<dbReference type="RefSeq" id="NP_445789.1">
    <property type="nucleotide sequence ID" value="NM_053337.1"/>
</dbReference>
<dbReference type="SMR" id="Q6AZ28"/>
<dbReference type="BioGRID" id="249702">
    <property type="interactions" value="3"/>
</dbReference>
<dbReference type="CORUM" id="Q6AZ28"/>
<dbReference type="FunCoup" id="Q6AZ28">
    <property type="interactions" value="2970"/>
</dbReference>
<dbReference type="STRING" id="10116.ENSRNOP00000023886"/>
<dbReference type="iPTMnet" id="Q6AZ28"/>
<dbReference type="PhosphoSitePlus" id="Q6AZ28"/>
<dbReference type="PaxDb" id="10116-ENSRNOP00000023886"/>
<dbReference type="GeneID" id="83422"/>
<dbReference type="KEGG" id="rno:83422"/>
<dbReference type="AGR" id="RGD:71056"/>
<dbReference type="CTD" id="9063"/>
<dbReference type="RGD" id="71056">
    <property type="gene designation" value="Pias2"/>
</dbReference>
<dbReference type="eggNOG" id="KOG2169">
    <property type="taxonomic scope" value="Eukaryota"/>
</dbReference>
<dbReference type="InParanoid" id="Q6AZ28"/>
<dbReference type="PhylomeDB" id="Q6AZ28"/>
<dbReference type="Reactome" id="R-RNO-3108214">
    <property type="pathway name" value="SUMOylation of DNA damage response and repair proteins"/>
</dbReference>
<dbReference type="Reactome" id="R-RNO-3232118">
    <property type="pathway name" value="SUMOylation of transcription factors"/>
</dbReference>
<dbReference type="Reactome" id="R-RNO-3232142">
    <property type="pathway name" value="SUMOylation of ubiquitinylation proteins"/>
</dbReference>
<dbReference type="Reactome" id="R-RNO-3899300">
    <property type="pathway name" value="SUMOylation of transcription cofactors"/>
</dbReference>
<dbReference type="Reactome" id="R-RNO-4090294">
    <property type="pathway name" value="SUMOylation of intracellular receptors"/>
</dbReference>
<dbReference type="Reactome" id="R-RNO-4551638">
    <property type="pathway name" value="SUMOylation of chromatin organization proteins"/>
</dbReference>
<dbReference type="UniPathway" id="UPA00886"/>
<dbReference type="PRO" id="PR:Q6AZ28"/>
<dbReference type="Proteomes" id="UP000002494">
    <property type="component" value="Unplaced"/>
</dbReference>
<dbReference type="GO" id="GO:0000785">
    <property type="term" value="C:chromatin"/>
    <property type="evidence" value="ECO:0000318"/>
    <property type="project" value="GO_Central"/>
</dbReference>
<dbReference type="GO" id="GO:0016607">
    <property type="term" value="C:nuclear speck"/>
    <property type="evidence" value="ECO:0007669"/>
    <property type="project" value="UniProtKB-SubCell"/>
</dbReference>
<dbReference type="GO" id="GO:0005634">
    <property type="term" value="C:nucleus"/>
    <property type="evidence" value="ECO:0000314"/>
    <property type="project" value="MGI"/>
</dbReference>
<dbReference type="GO" id="GO:0016605">
    <property type="term" value="C:PML body"/>
    <property type="evidence" value="ECO:0000266"/>
    <property type="project" value="RGD"/>
</dbReference>
<dbReference type="GO" id="GO:0003677">
    <property type="term" value="F:DNA binding"/>
    <property type="evidence" value="ECO:0000266"/>
    <property type="project" value="RGD"/>
</dbReference>
<dbReference type="GO" id="GO:0050681">
    <property type="term" value="F:nuclear androgen receptor binding"/>
    <property type="evidence" value="ECO:0000353"/>
    <property type="project" value="MGI"/>
</dbReference>
<dbReference type="GO" id="GO:0030331">
    <property type="term" value="F:nuclear estrogen receptor binding"/>
    <property type="evidence" value="ECO:0000353"/>
    <property type="project" value="RGD"/>
</dbReference>
<dbReference type="GO" id="GO:0035259">
    <property type="term" value="F:nuclear glucocorticoid receptor binding"/>
    <property type="evidence" value="ECO:0000353"/>
    <property type="project" value="RGD"/>
</dbReference>
<dbReference type="GO" id="GO:0019904">
    <property type="term" value="F:protein domain specific binding"/>
    <property type="evidence" value="ECO:0000353"/>
    <property type="project" value="RGD"/>
</dbReference>
<dbReference type="GO" id="GO:0061629">
    <property type="term" value="F:RNA polymerase II-specific DNA-binding transcription factor binding"/>
    <property type="evidence" value="ECO:0000266"/>
    <property type="project" value="RGD"/>
</dbReference>
<dbReference type="GO" id="GO:0061665">
    <property type="term" value="F:SUMO ligase activity"/>
    <property type="evidence" value="ECO:0000266"/>
    <property type="project" value="RGD"/>
</dbReference>
<dbReference type="GO" id="GO:0019789">
    <property type="term" value="F:SUMO transferase activity"/>
    <property type="evidence" value="ECO:0000266"/>
    <property type="project" value="RGD"/>
</dbReference>
<dbReference type="GO" id="GO:0003712">
    <property type="term" value="F:transcription coregulator activity"/>
    <property type="evidence" value="ECO:0000318"/>
    <property type="project" value="GO_Central"/>
</dbReference>
<dbReference type="GO" id="GO:0031625">
    <property type="term" value="F:ubiquitin protein ligase binding"/>
    <property type="evidence" value="ECO:0000266"/>
    <property type="project" value="RGD"/>
</dbReference>
<dbReference type="GO" id="GO:0008270">
    <property type="term" value="F:zinc ion binding"/>
    <property type="evidence" value="ECO:0007669"/>
    <property type="project" value="UniProtKB-KW"/>
</dbReference>
<dbReference type="GO" id="GO:0030521">
    <property type="term" value="P:androgen receptor signaling pathway"/>
    <property type="evidence" value="ECO:0000315"/>
    <property type="project" value="RGD"/>
</dbReference>
<dbReference type="GO" id="GO:0006351">
    <property type="term" value="P:DNA-templated transcription"/>
    <property type="evidence" value="ECO:0000266"/>
    <property type="project" value="RGD"/>
</dbReference>
<dbReference type="GO" id="GO:0060766">
    <property type="term" value="P:negative regulation of androgen receptor signaling pathway"/>
    <property type="evidence" value="ECO:0000266"/>
    <property type="project" value="RGD"/>
</dbReference>
<dbReference type="GO" id="GO:0050775">
    <property type="term" value="P:positive regulation of dendrite morphogenesis"/>
    <property type="evidence" value="ECO:0000315"/>
    <property type="project" value="RGD"/>
</dbReference>
<dbReference type="GO" id="GO:0045893">
    <property type="term" value="P:positive regulation of DNA-templated transcription"/>
    <property type="evidence" value="ECO:0000315"/>
    <property type="project" value="RGD"/>
</dbReference>
<dbReference type="GO" id="GO:0016925">
    <property type="term" value="P:protein sumoylation"/>
    <property type="evidence" value="ECO:0000250"/>
    <property type="project" value="UniProtKB"/>
</dbReference>
<dbReference type="GO" id="GO:0060765">
    <property type="term" value="P:regulation of androgen receptor signaling pathway"/>
    <property type="evidence" value="ECO:0000314"/>
    <property type="project" value="MGI"/>
</dbReference>
<dbReference type="GO" id="GO:0006355">
    <property type="term" value="P:regulation of DNA-templated transcription"/>
    <property type="evidence" value="ECO:0000314"/>
    <property type="project" value="RGD"/>
</dbReference>
<dbReference type="GO" id="GO:0006357">
    <property type="term" value="P:regulation of transcription by RNA polymerase II"/>
    <property type="evidence" value="ECO:0000266"/>
    <property type="project" value="RGD"/>
</dbReference>
<dbReference type="GO" id="GO:0033574">
    <property type="term" value="P:response to testosterone"/>
    <property type="evidence" value="ECO:0000270"/>
    <property type="project" value="RGD"/>
</dbReference>
<dbReference type="GO" id="GO:0007283">
    <property type="term" value="P:spermatogenesis"/>
    <property type="evidence" value="ECO:0000270"/>
    <property type="project" value="RGD"/>
</dbReference>
<dbReference type="CDD" id="cd16819">
    <property type="entry name" value="SP-RING_PIAS2"/>
    <property type="match status" value="1"/>
</dbReference>
<dbReference type="FunFam" id="1.10.720.30:FF:000001">
    <property type="entry name" value="E3 SUMO-protein ligase PIAS2 isoform 1"/>
    <property type="match status" value="1"/>
</dbReference>
<dbReference type="FunFam" id="2.60.120.780:FF:000001">
    <property type="entry name" value="E3 SUMO-protein ligase PIAS2 isoform X1"/>
    <property type="match status" value="1"/>
</dbReference>
<dbReference type="FunFam" id="3.30.40.10:FF:000003">
    <property type="entry name" value="E3 SUMO-protein ligase PIAS2 isoform X1"/>
    <property type="match status" value="1"/>
</dbReference>
<dbReference type="Gene3D" id="2.60.120.780">
    <property type="entry name" value="PINIT domain"/>
    <property type="match status" value="1"/>
</dbReference>
<dbReference type="Gene3D" id="1.10.720.30">
    <property type="entry name" value="SAP domain"/>
    <property type="match status" value="1"/>
</dbReference>
<dbReference type="Gene3D" id="3.30.40.10">
    <property type="entry name" value="Zinc/RING finger domain, C3HC4 (zinc finger)"/>
    <property type="match status" value="1"/>
</dbReference>
<dbReference type="InterPro" id="IPR023321">
    <property type="entry name" value="PINIT"/>
</dbReference>
<dbReference type="InterPro" id="IPR038654">
    <property type="entry name" value="PINIT_sf"/>
</dbReference>
<dbReference type="InterPro" id="IPR003034">
    <property type="entry name" value="SAP_dom"/>
</dbReference>
<dbReference type="InterPro" id="IPR036361">
    <property type="entry name" value="SAP_dom_sf"/>
</dbReference>
<dbReference type="InterPro" id="IPR004181">
    <property type="entry name" value="Znf_MIZ"/>
</dbReference>
<dbReference type="InterPro" id="IPR013083">
    <property type="entry name" value="Znf_RING/FYVE/PHD"/>
</dbReference>
<dbReference type="PANTHER" id="PTHR10782:SF12">
    <property type="entry name" value="E3 SUMO-PROTEIN LIGASE PIAS2"/>
    <property type="match status" value="1"/>
</dbReference>
<dbReference type="PANTHER" id="PTHR10782">
    <property type="entry name" value="ZINC FINGER MIZ DOMAIN-CONTAINING PROTEIN"/>
    <property type="match status" value="1"/>
</dbReference>
<dbReference type="Pfam" id="PF14324">
    <property type="entry name" value="PINIT"/>
    <property type="match status" value="1"/>
</dbReference>
<dbReference type="Pfam" id="PF02037">
    <property type="entry name" value="SAP"/>
    <property type="match status" value="1"/>
</dbReference>
<dbReference type="Pfam" id="PF02891">
    <property type="entry name" value="zf-MIZ"/>
    <property type="match status" value="1"/>
</dbReference>
<dbReference type="SMART" id="SM00513">
    <property type="entry name" value="SAP"/>
    <property type="match status" value="1"/>
</dbReference>
<dbReference type="SUPFAM" id="SSF68906">
    <property type="entry name" value="SAP domain"/>
    <property type="match status" value="1"/>
</dbReference>
<dbReference type="PROSITE" id="PS51466">
    <property type="entry name" value="PINIT"/>
    <property type="match status" value="1"/>
</dbReference>
<dbReference type="PROSITE" id="PS50800">
    <property type="entry name" value="SAP"/>
    <property type="match status" value="1"/>
</dbReference>
<dbReference type="PROSITE" id="PS51044">
    <property type="entry name" value="ZF_SP_RING"/>
    <property type="match status" value="1"/>
</dbReference>
<comment type="function">
    <text evidence="1">Functions as an E3-type small ubiquitin-like modifier (SUMO) ligase, stabilizing the interaction between UBE2I and the substrate, and as a SUMO-tethering factor. Plays a crucial role as a transcriptional coregulation in various cellular pathways, including the STAT pathway, the p53 pathway and the steroid hormone signaling pathway. The effects of this transcriptional coregulation, transactivation or silencing may vary depending upon the biological context and PIAS2 isoform studied. However, it seems to be mostly involved in gene silencing. Binds to sumoylated ELK1 and enhances its transcriptional activity by preventing recruitment of HDAC2 by ELK1, thus reversing SUMO-mediated repression of ELK1 transactivation activity (By similarity). Sumoylates PML at'Lys-65' and 'Lys-160' (By similarity).</text>
</comment>
<comment type="pathway">
    <text>Protein modification; protein sumoylation.</text>
</comment>
<comment type="subunit">
    <text evidence="1 2">Binds SUMO1 and UBE2I. Interacts with AXIN1, JUN, MDM2, PARK7, TP53 and TP73 isoform alpha, but not TP73 isoform beta. Interacts with STAT4 following IL12 and IFN-alpha stimulation of T-cells. Interacts also with GTF2I, GTF2IRD1, IKFZ1, DAB2 and MSX2, as well as with several steroid receptors, including ESR1, ESR2, NR3C1, PGR, AR, and with NCOA2. Sumoylation of a target protein seems to enhance the interaction. Binds to sumoylated ELK1. Binds DNA, such as CDKN1A promoter, in a sequence-specific manner. Interacts with PLAG1. Interacts with KLF8; the interaction results in SUMO ligation and repression of KLF8 transcriptional activity and of its cell cycle progression into G(1) phase (By similarity). Interacts with IFIH1/MDA5 (By similarity). Interacts with PML (By similarity). Interacts with PRDM1 (By similarity).</text>
</comment>
<comment type="subcellular location">
    <subcellularLocation>
        <location evidence="9 10">Nucleus speckle</location>
    </subcellularLocation>
    <subcellularLocation>
        <location evidence="2">Nucleus</location>
        <location evidence="2">PML body</location>
    </subcellularLocation>
    <subcellularLocation>
        <location evidence="10">Nucleus</location>
    </subcellularLocation>
    <text evidence="2 9">Colocalizes at least partially with promyelocytic leukemia nuclear bodies (PML NBs) (By similarity). Colocalizes with SUMO1 in nuclear granules (PubMed:12077349).</text>
</comment>
<comment type="tissue specificity">
    <text evidence="10">Mainly expressed in testis.</text>
</comment>
<comment type="developmental stage">
    <text>Expressed in spermatogonia and in primary spermatocytes up to late pachytene stage (at protein level).</text>
</comment>
<comment type="domain">
    <text>The LXXLL motif is a transcriptional coregulator signature.</text>
</comment>
<comment type="PTM">
    <text evidence="9">Sumoylated.</text>
</comment>
<comment type="similarity">
    <text evidence="11">Belongs to the PIAS family.</text>
</comment>
<keyword id="KW-0238">DNA-binding</keyword>
<keyword id="KW-1017">Isopeptide bond</keyword>
<keyword id="KW-0479">Metal-binding</keyword>
<keyword id="KW-0539">Nucleus</keyword>
<keyword id="KW-0597">Phosphoprotein</keyword>
<keyword id="KW-1185">Reference proteome</keyword>
<keyword id="KW-0804">Transcription</keyword>
<keyword id="KW-0805">Transcription regulation</keyword>
<keyword id="KW-0808">Transferase</keyword>
<keyword id="KW-0832">Ubl conjugation</keyword>
<keyword id="KW-0833">Ubl conjugation pathway</keyword>
<keyword id="KW-0862">Zinc</keyword>
<keyword id="KW-0863">Zinc-finger</keyword>
<evidence type="ECO:0000250" key="1"/>
<evidence type="ECO:0000250" key="2">
    <source>
        <dbReference type="UniProtKB" id="O75928"/>
    </source>
</evidence>
<evidence type="ECO:0000250" key="3">
    <source>
        <dbReference type="UniProtKB" id="Q8C5D8"/>
    </source>
</evidence>
<evidence type="ECO:0000255" key="4">
    <source>
        <dbReference type="PROSITE-ProRule" id="PRU00186"/>
    </source>
</evidence>
<evidence type="ECO:0000255" key="5">
    <source>
        <dbReference type="PROSITE-ProRule" id="PRU00452"/>
    </source>
</evidence>
<evidence type="ECO:0000255" key="6">
    <source>
        <dbReference type="PROSITE-ProRule" id="PRU00799"/>
    </source>
</evidence>
<evidence type="ECO:0000256" key="7">
    <source>
        <dbReference type="SAM" id="MobiDB-lite"/>
    </source>
</evidence>
<evidence type="ECO:0000269" key="8">
    <source>
    </source>
</evidence>
<evidence type="ECO:0000269" key="9">
    <source>
    </source>
</evidence>
<evidence type="ECO:0000269" key="10">
    <source>
    </source>
</evidence>
<evidence type="ECO:0000305" key="11"/>
<reference key="1">
    <citation type="journal article" date="1999" name="J. Biol. Chem.">
        <title>A testis-specific androgen receptor coregulator that belongs to a novel family of nuclear proteins.</title>
        <authorList>
            <person name="Moilanen A.-M."/>
            <person name="Karvonen U."/>
            <person name="Poukka H."/>
            <person name="Yan W."/>
            <person name="Toppari J."/>
            <person name="Jaenne O.A."/>
            <person name="Palvimo J.J."/>
        </authorList>
    </citation>
    <scope>NUCLEOTIDE SEQUENCE [MRNA]</scope>
    <scope>INTERACTION WITH AR</scope>
    <scope>SUBCELLULAR LOCATION</scope>
    <scope>TISSUE SPECIFICITY</scope>
    <source>
        <tissue>Testis</tissue>
    </source>
</reference>
<reference key="2">
    <citation type="journal article" date="2004" name="Genome Res.">
        <title>The status, quality, and expansion of the NIH full-length cDNA project: the Mammalian Gene Collection (MGC).</title>
        <authorList>
            <consortium name="The MGC Project Team"/>
        </authorList>
    </citation>
    <scope>NUCLEOTIDE SEQUENCE [LARGE SCALE MRNA]</scope>
    <source>
        <tissue>Testis</tissue>
    </source>
</reference>
<reference key="3">
    <citation type="journal article" date="2000" name="Mol. Endocrinol.">
        <title>ARIP3 (androgen receptor-interacting protein 3) and other PIAS (protein inhibitor of activated STAT) proteins differ in their ability to modulate steroid receptor-dependent transcriptional activation.</title>
        <authorList>
            <person name="Kotaja N."/>
            <person name="Aittomaeki S."/>
            <person name="Silvennoinen O."/>
            <person name="Palvimo J.J."/>
            <person name="Jaenne O.A."/>
        </authorList>
    </citation>
    <scope>INTERACTION WITH AR; ESR1; ESR2; NR3C1 AND PGR</scope>
</reference>
<reference key="4">
    <citation type="journal article" date="2002" name="J. Biol. Chem.">
        <title>Androgen receptor-interacting protein 3 and other PIAS proteins cooperate with glucocorticoid receptor-interacting protein 1 in steroid receptor-dependent signaling.</title>
        <authorList>
            <person name="Kotaja N."/>
            <person name="Vihinen M."/>
            <person name="Palvimo J.J."/>
            <person name="Jaenne O.A."/>
        </authorList>
    </citation>
    <scope>INTERACTION WITH NCOA2</scope>
    <scope>MUTAGENESIS OF LEU-23; LEU-304; CYS-385 AND CYS-388</scope>
</reference>
<reference key="5">
    <citation type="journal article" date="2002" name="Mol. Cell. Biol.">
        <title>PIAS proteins modulate transcription factors by functioning as SUMO-1 ligases.</title>
        <authorList>
            <person name="Kotaja N."/>
            <person name="Karvonen U."/>
            <person name="Jaenne O.A."/>
            <person name="Palvimo J.J."/>
        </authorList>
    </citation>
    <scope>INTERACTION WITH SUMO1; UBE2I AND AR</scope>
    <scope>SUMOYLATION OF AR; JUN AND NCOA2</scope>
    <scope>SUBCELLULAR LOCATION</scope>
    <scope>MUTAGENESIS OF LYS-324; LYS-326; LYS-379; LYS-380; TRP-383; LYS-390; LYS-391; LYS-430 AND LYS-431</scope>
</reference>
<reference key="6">
    <citation type="journal article" date="2003" name="Blood">
        <title>PIAS proteins promote SUMO-1 conjugation to STAT1.</title>
        <authorList>
            <person name="Ungureanu D."/>
            <person name="Vanhatupa S."/>
            <person name="Kotaja N."/>
            <person name="Yang J."/>
            <person name="Aittomaeki S."/>
            <person name="Jaenne O.A."/>
            <person name="Palvimo J.J."/>
            <person name="Silvennoinen O."/>
        </authorList>
    </citation>
    <scope>STAT1 SUMOYLATION</scope>
</reference>
<protein>
    <recommendedName>
        <fullName>E3 SUMO-protein ligase PIAS2</fullName>
        <ecNumber>2.3.2.-</ecNumber>
    </recommendedName>
    <alternativeName>
        <fullName>Androgen receptor-interacting protein 3</fullName>
        <shortName>ARIP3</shortName>
    </alternativeName>
    <alternativeName>
        <fullName>DAB2-interacting protein</fullName>
        <shortName>DIP</shortName>
    </alternativeName>
    <alternativeName>
        <fullName evidence="11">E3 SUMO-protein transferase PIAS2</fullName>
    </alternativeName>
    <alternativeName>
        <fullName>Msx-interacting-zinc finger protein</fullName>
    </alternativeName>
    <alternativeName>
        <fullName>Protein inhibitor of activated STAT x</fullName>
    </alternativeName>
    <alternativeName>
        <fullName>Protein inhibitor of activated STAT2</fullName>
    </alternativeName>
</protein>